<comment type="function">
    <text evidence="1">One of the primary rRNA binding proteins, it binds directly to 16S rRNA where it nucleates assembly of the body of the 30S subunit.</text>
</comment>
<comment type="function">
    <text evidence="1">With S5 and S12 plays an important role in translational accuracy.</text>
</comment>
<comment type="subunit">
    <text evidence="1">Part of the 30S ribosomal subunit. Contacts protein S5. The interaction surface between S4 and S5 is involved in control of translational fidelity.</text>
</comment>
<comment type="similarity">
    <text evidence="1">Belongs to the universal ribosomal protein uS4 family.</text>
</comment>
<dbReference type="EMBL" id="CP000746">
    <property type="protein sequence ID" value="ABR73859.1"/>
    <property type="molecule type" value="Genomic_DNA"/>
</dbReference>
<dbReference type="RefSeq" id="WP_012072239.1">
    <property type="nucleotide sequence ID" value="NC_009655.1"/>
</dbReference>
<dbReference type="SMR" id="A6VLL2"/>
<dbReference type="STRING" id="339671.Asuc_0483"/>
<dbReference type="KEGG" id="asu:Asuc_0483"/>
<dbReference type="eggNOG" id="COG0522">
    <property type="taxonomic scope" value="Bacteria"/>
</dbReference>
<dbReference type="HOGENOM" id="CLU_092403_0_2_6"/>
<dbReference type="OrthoDB" id="9803672at2"/>
<dbReference type="Proteomes" id="UP000001114">
    <property type="component" value="Chromosome"/>
</dbReference>
<dbReference type="GO" id="GO:0015935">
    <property type="term" value="C:small ribosomal subunit"/>
    <property type="evidence" value="ECO:0007669"/>
    <property type="project" value="InterPro"/>
</dbReference>
<dbReference type="GO" id="GO:0019843">
    <property type="term" value="F:rRNA binding"/>
    <property type="evidence" value="ECO:0007669"/>
    <property type="project" value="UniProtKB-UniRule"/>
</dbReference>
<dbReference type="GO" id="GO:0003735">
    <property type="term" value="F:structural constituent of ribosome"/>
    <property type="evidence" value="ECO:0007669"/>
    <property type="project" value="InterPro"/>
</dbReference>
<dbReference type="GO" id="GO:0042274">
    <property type="term" value="P:ribosomal small subunit biogenesis"/>
    <property type="evidence" value="ECO:0007669"/>
    <property type="project" value="TreeGrafter"/>
</dbReference>
<dbReference type="GO" id="GO:0006412">
    <property type="term" value="P:translation"/>
    <property type="evidence" value="ECO:0007669"/>
    <property type="project" value="UniProtKB-UniRule"/>
</dbReference>
<dbReference type="CDD" id="cd00165">
    <property type="entry name" value="S4"/>
    <property type="match status" value="1"/>
</dbReference>
<dbReference type="FunFam" id="1.10.1050.10:FF:000001">
    <property type="entry name" value="30S ribosomal protein S4"/>
    <property type="match status" value="1"/>
</dbReference>
<dbReference type="FunFam" id="3.10.290.10:FF:000001">
    <property type="entry name" value="30S ribosomal protein S4"/>
    <property type="match status" value="1"/>
</dbReference>
<dbReference type="Gene3D" id="1.10.1050.10">
    <property type="entry name" value="Ribosomal Protein S4 Delta 41, Chain A, domain 1"/>
    <property type="match status" value="1"/>
</dbReference>
<dbReference type="Gene3D" id="3.10.290.10">
    <property type="entry name" value="RNA-binding S4 domain"/>
    <property type="match status" value="1"/>
</dbReference>
<dbReference type="HAMAP" id="MF_01306_B">
    <property type="entry name" value="Ribosomal_uS4_B"/>
    <property type="match status" value="1"/>
</dbReference>
<dbReference type="InterPro" id="IPR022801">
    <property type="entry name" value="Ribosomal_uS4"/>
</dbReference>
<dbReference type="InterPro" id="IPR005709">
    <property type="entry name" value="Ribosomal_uS4_bac-type"/>
</dbReference>
<dbReference type="InterPro" id="IPR018079">
    <property type="entry name" value="Ribosomal_uS4_CS"/>
</dbReference>
<dbReference type="InterPro" id="IPR001912">
    <property type="entry name" value="Ribosomal_uS4_N"/>
</dbReference>
<dbReference type="InterPro" id="IPR002942">
    <property type="entry name" value="S4_RNA-bd"/>
</dbReference>
<dbReference type="InterPro" id="IPR036986">
    <property type="entry name" value="S4_RNA-bd_sf"/>
</dbReference>
<dbReference type="NCBIfam" id="NF003717">
    <property type="entry name" value="PRK05327.1"/>
    <property type="match status" value="1"/>
</dbReference>
<dbReference type="NCBIfam" id="TIGR01017">
    <property type="entry name" value="rpsD_bact"/>
    <property type="match status" value="1"/>
</dbReference>
<dbReference type="PANTHER" id="PTHR11831">
    <property type="entry name" value="30S 40S RIBOSOMAL PROTEIN"/>
    <property type="match status" value="1"/>
</dbReference>
<dbReference type="PANTHER" id="PTHR11831:SF4">
    <property type="entry name" value="SMALL RIBOSOMAL SUBUNIT PROTEIN US4M"/>
    <property type="match status" value="1"/>
</dbReference>
<dbReference type="Pfam" id="PF00163">
    <property type="entry name" value="Ribosomal_S4"/>
    <property type="match status" value="1"/>
</dbReference>
<dbReference type="Pfam" id="PF01479">
    <property type="entry name" value="S4"/>
    <property type="match status" value="1"/>
</dbReference>
<dbReference type="SMART" id="SM01390">
    <property type="entry name" value="Ribosomal_S4"/>
    <property type="match status" value="1"/>
</dbReference>
<dbReference type="SMART" id="SM00363">
    <property type="entry name" value="S4"/>
    <property type="match status" value="1"/>
</dbReference>
<dbReference type="SUPFAM" id="SSF55174">
    <property type="entry name" value="Alpha-L RNA-binding motif"/>
    <property type="match status" value="1"/>
</dbReference>
<dbReference type="PROSITE" id="PS00632">
    <property type="entry name" value="RIBOSOMAL_S4"/>
    <property type="match status" value="1"/>
</dbReference>
<dbReference type="PROSITE" id="PS50889">
    <property type="entry name" value="S4"/>
    <property type="match status" value="1"/>
</dbReference>
<reference key="1">
    <citation type="journal article" date="2010" name="BMC Genomics">
        <title>A genomic perspective on the potential of Actinobacillus succinogenes for industrial succinate production.</title>
        <authorList>
            <person name="McKinlay J.B."/>
            <person name="Laivenieks M."/>
            <person name="Schindler B.D."/>
            <person name="McKinlay A.A."/>
            <person name="Siddaramappa S."/>
            <person name="Challacombe J.F."/>
            <person name="Lowry S.R."/>
            <person name="Clum A."/>
            <person name="Lapidus A.L."/>
            <person name="Burkhart K.B."/>
            <person name="Harkins V."/>
            <person name="Vieille C."/>
        </authorList>
    </citation>
    <scope>NUCLEOTIDE SEQUENCE [LARGE SCALE GENOMIC DNA]</scope>
    <source>
        <strain>ATCC 55618 / DSM 22257 / CCUG 43843 / 130Z</strain>
    </source>
</reference>
<accession>A6VLL2</accession>
<feature type="chain" id="PRO_0000322258" description="Small ribosomal subunit protein uS4">
    <location>
        <begin position="1"/>
        <end position="206"/>
    </location>
</feature>
<feature type="domain" description="S4 RNA-binding" evidence="1">
    <location>
        <begin position="96"/>
        <end position="156"/>
    </location>
</feature>
<organism>
    <name type="scientific">Actinobacillus succinogenes (strain ATCC 55618 / DSM 22257 / CCUG 43843 / 130Z)</name>
    <dbReference type="NCBI Taxonomy" id="339671"/>
    <lineage>
        <taxon>Bacteria</taxon>
        <taxon>Pseudomonadati</taxon>
        <taxon>Pseudomonadota</taxon>
        <taxon>Gammaproteobacteria</taxon>
        <taxon>Pasteurellales</taxon>
        <taxon>Pasteurellaceae</taxon>
        <taxon>Actinobacillus</taxon>
    </lineage>
</organism>
<sequence>MARYLGPKLKLSRREGTDLFLKSGVRAIDSKCKIDTAPGQHGARKPRLSDYGSQLREKQKVRRIYGILERQFRNYYKEANRLKGNTGENLLVLLEGRLDNVVYRMGFAATRAEARQLVSHKAIVVNGRVVNIPSFQVSVDDVVAIREKSKKQARIKASLELAEQKEKPTWLEVDSAKMEGVFKRVPERSDLSADINEHLIVELYSK</sequence>
<gene>
    <name evidence="1" type="primary">rpsD</name>
    <name type="ordered locus">Asuc_0483</name>
</gene>
<keyword id="KW-1185">Reference proteome</keyword>
<keyword id="KW-0687">Ribonucleoprotein</keyword>
<keyword id="KW-0689">Ribosomal protein</keyword>
<keyword id="KW-0694">RNA-binding</keyword>
<keyword id="KW-0699">rRNA-binding</keyword>
<protein>
    <recommendedName>
        <fullName evidence="1">Small ribosomal subunit protein uS4</fullName>
    </recommendedName>
    <alternativeName>
        <fullName evidence="2">30S ribosomal protein S4</fullName>
    </alternativeName>
</protein>
<name>RS4_ACTSZ</name>
<evidence type="ECO:0000255" key="1">
    <source>
        <dbReference type="HAMAP-Rule" id="MF_01306"/>
    </source>
</evidence>
<evidence type="ECO:0000305" key="2"/>
<proteinExistence type="inferred from homology"/>